<reference key="1">
    <citation type="journal article" date="2000" name="Proc. Natl. Acad. Sci. U.S.A.">
        <title>Archaeal adaptation to higher temperatures revealed by genomic sequence of Thermoplasma volcanium.</title>
        <authorList>
            <person name="Kawashima T."/>
            <person name="Amano N."/>
            <person name="Koike H."/>
            <person name="Makino S."/>
            <person name="Higuchi S."/>
            <person name="Kawashima-Ohya Y."/>
            <person name="Watanabe K."/>
            <person name="Yamazaki M."/>
            <person name="Kanehori K."/>
            <person name="Kawamoto T."/>
            <person name="Nunoshiba T."/>
            <person name="Yamamoto Y."/>
            <person name="Aramaki H."/>
            <person name="Makino K."/>
            <person name="Suzuki M."/>
        </authorList>
    </citation>
    <scope>NUCLEOTIDE SEQUENCE [LARGE SCALE GENOMIC DNA]</scope>
    <source>
        <strain>ATCC 51530 / DSM 4299 / JCM 9571 / NBRC 15438 / GSS1</strain>
    </source>
</reference>
<comment type="function">
    <text evidence="1">Catalyzes the conversion of dihydroorotate to orotate with NAD(+) as electron acceptor.</text>
</comment>
<comment type="catalytic activity">
    <reaction>
        <text>(S)-dihydroorotate + NAD(+) = orotate + NADH + H(+)</text>
        <dbReference type="Rhea" id="RHEA:13513"/>
        <dbReference type="ChEBI" id="CHEBI:15378"/>
        <dbReference type="ChEBI" id="CHEBI:30839"/>
        <dbReference type="ChEBI" id="CHEBI:30864"/>
        <dbReference type="ChEBI" id="CHEBI:57540"/>
        <dbReference type="ChEBI" id="CHEBI:57945"/>
        <dbReference type="EC" id="1.3.1.14"/>
    </reaction>
</comment>
<comment type="cofactor">
    <cofactor evidence="1">
        <name>FMN</name>
        <dbReference type="ChEBI" id="CHEBI:58210"/>
    </cofactor>
    <text evidence="1">Binds 1 FMN per subunit.</text>
</comment>
<comment type="pathway">
    <text>Pyrimidine metabolism; UMP biosynthesis via de novo pathway; orotate from (S)-dihydroorotate (NAD(+) route): step 1/1.</text>
</comment>
<comment type="subunit">
    <text evidence="1">Heterotetramer of 2 PyrK and 2 PyrD type B subunits.</text>
</comment>
<comment type="subcellular location">
    <subcellularLocation>
        <location evidence="1">Cytoplasm</location>
    </subcellularLocation>
</comment>
<comment type="similarity">
    <text evidence="2">Belongs to the dihydroorotate dehydrogenase family. Type 1 subfamily.</text>
</comment>
<keyword id="KW-0963">Cytoplasm</keyword>
<keyword id="KW-0285">Flavoprotein</keyword>
<keyword id="KW-0288">FMN</keyword>
<keyword id="KW-0520">NAD</keyword>
<keyword id="KW-0560">Oxidoreductase</keyword>
<keyword id="KW-0665">Pyrimidine biosynthesis</keyword>
<proteinExistence type="inferred from homology"/>
<accession>Q979G6</accession>
<evidence type="ECO:0000250" key="1"/>
<evidence type="ECO:0000305" key="2"/>
<organism>
    <name type="scientific">Thermoplasma volcanium (strain ATCC 51530 / DSM 4299 / JCM 9571 / NBRC 15438 / GSS1)</name>
    <dbReference type="NCBI Taxonomy" id="273116"/>
    <lineage>
        <taxon>Archaea</taxon>
        <taxon>Methanobacteriati</taxon>
        <taxon>Thermoplasmatota</taxon>
        <taxon>Thermoplasmata</taxon>
        <taxon>Thermoplasmatales</taxon>
        <taxon>Thermoplasmataceae</taxon>
        <taxon>Thermoplasma</taxon>
    </lineage>
</organism>
<name>PYRDB_THEVO</name>
<feature type="chain" id="PRO_0000148419" description="Dihydroorotate dehydrogenase B (NAD(+)), catalytic subunit">
    <location>
        <begin position="1"/>
        <end position="301"/>
    </location>
</feature>
<feature type="active site" description="Nucleophile">
    <location>
        <position position="128"/>
    </location>
</feature>
<feature type="binding site" evidence="1">
    <location>
        <position position="21"/>
    </location>
    <ligand>
        <name>FMN</name>
        <dbReference type="ChEBI" id="CHEBI:58210"/>
    </ligand>
</feature>
<feature type="binding site" evidence="1">
    <location>
        <begin position="45"/>
        <end position="46"/>
    </location>
    <ligand>
        <name>FMN</name>
        <dbReference type="ChEBI" id="CHEBI:58210"/>
    </ligand>
</feature>
<feature type="binding site" evidence="1">
    <location>
        <position position="45"/>
    </location>
    <ligand>
        <name>substrate</name>
    </ligand>
</feature>
<feature type="binding site" evidence="1">
    <location>
        <begin position="69"/>
        <end position="73"/>
    </location>
    <ligand>
        <name>substrate</name>
    </ligand>
</feature>
<feature type="binding site" evidence="1">
    <location>
        <position position="125"/>
    </location>
    <ligand>
        <name>FMN</name>
        <dbReference type="ChEBI" id="CHEBI:58210"/>
    </ligand>
</feature>
<feature type="binding site" evidence="1">
    <location>
        <position position="125"/>
    </location>
    <ligand>
        <name>substrate</name>
    </ligand>
</feature>
<feature type="binding site" evidence="1">
    <location>
        <position position="163"/>
    </location>
    <ligand>
        <name>FMN</name>
        <dbReference type="ChEBI" id="CHEBI:58210"/>
    </ligand>
</feature>
<feature type="binding site" evidence="1">
    <location>
        <position position="187"/>
    </location>
    <ligand>
        <name>FMN</name>
        <dbReference type="ChEBI" id="CHEBI:58210"/>
    </ligand>
</feature>
<feature type="binding site" evidence="1">
    <location>
        <begin position="188"/>
        <end position="189"/>
    </location>
    <ligand>
        <name>substrate</name>
    </ligand>
</feature>
<feature type="binding site" evidence="1">
    <location>
        <position position="213"/>
    </location>
    <ligand>
        <name>FMN</name>
        <dbReference type="ChEBI" id="CHEBI:58210"/>
    </ligand>
</feature>
<feature type="binding site" evidence="1">
    <location>
        <begin position="239"/>
        <end position="240"/>
    </location>
    <ligand>
        <name>FMN</name>
        <dbReference type="ChEBI" id="CHEBI:58210"/>
    </ligand>
</feature>
<feature type="binding site" evidence="1">
    <location>
        <begin position="261"/>
        <end position="262"/>
    </location>
    <ligand>
        <name>FMN</name>
        <dbReference type="ChEBI" id="CHEBI:58210"/>
    </ligand>
</feature>
<dbReference type="EC" id="1.3.1.14"/>
<dbReference type="EMBL" id="BA000011">
    <property type="protein sequence ID" value="BAB60337.1"/>
    <property type="molecule type" value="Genomic_DNA"/>
</dbReference>
<dbReference type="RefSeq" id="WP_010917428.1">
    <property type="nucleotide sequence ID" value="NC_002689.2"/>
</dbReference>
<dbReference type="SMR" id="Q979G6"/>
<dbReference type="STRING" id="273116.gene:9381996"/>
<dbReference type="PaxDb" id="273116-14325433"/>
<dbReference type="GeneID" id="1441310"/>
<dbReference type="KEGG" id="tvo:TVG1224769"/>
<dbReference type="eggNOG" id="arCOG00603">
    <property type="taxonomic scope" value="Archaea"/>
</dbReference>
<dbReference type="HOGENOM" id="CLU_042042_0_0_2"/>
<dbReference type="OrthoDB" id="36608at2157"/>
<dbReference type="PhylomeDB" id="Q979G6"/>
<dbReference type="UniPathway" id="UPA00070">
    <property type="reaction ID" value="UER00945"/>
</dbReference>
<dbReference type="Proteomes" id="UP000001017">
    <property type="component" value="Chromosome"/>
</dbReference>
<dbReference type="GO" id="GO:0005737">
    <property type="term" value="C:cytoplasm"/>
    <property type="evidence" value="ECO:0007669"/>
    <property type="project" value="UniProtKB-SubCell"/>
</dbReference>
<dbReference type="GO" id="GO:0004589">
    <property type="term" value="F:dihydroorotate dehydrogenase (NAD+) activity"/>
    <property type="evidence" value="ECO:0007669"/>
    <property type="project" value="UniProtKB-EC"/>
</dbReference>
<dbReference type="GO" id="GO:0050661">
    <property type="term" value="F:NADP binding"/>
    <property type="evidence" value="ECO:0007669"/>
    <property type="project" value="TreeGrafter"/>
</dbReference>
<dbReference type="GO" id="GO:0002058">
    <property type="term" value="F:uracil binding"/>
    <property type="evidence" value="ECO:0007669"/>
    <property type="project" value="TreeGrafter"/>
</dbReference>
<dbReference type="GO" id="GO:0006207">
    <property type="term" value="P:'de novo' pyrimidine nucleobase biosynthetic process"/>
    <property type="evidence" value="ECO:0007669"/>
    <property type="project" value="InterPro"/>
</dbReference>
<dbReference type="GO" id="GO:0044205">
    <property type="term" value="P:'de novo' UMP biosynthetic process"/>
    <property type="evidence" value="ECO:0007669"/>
    <property type="project" value="UniProtKB-UniRule"/>
</dbReference>
<dbReference type="GO" id="GO:0006210">
    <property type="term" value="P:thymine catabolic process"/>
    <property type="evidence" value="ECO:0007669"/>
    <property type="project" value="TreeGrafter"/>
</dbReference>
<dbReference type="GO" id="GO:0006212">
    <property type="term" value="P:uracil catabolic process"/>
    <property type="evidence" value="ECO:0007669"/>
    <property type="project" value="TreeGrafter"/>
</dbReference>
<dbReference type="CDD" id="cd04740">
    <property type="entry name" value="DHOD_1B_like"/>
    <property type="match status" value="1"/>
</dbReference>
<dbReference type="FunFam" id="3.20.20.70:FF:000027">
    <property type="entry name" value="Dihydropyrimidine dehydrogenase [NADP(+)]"/>
    <property type="match status" value="1"/>
</dbReference>
<dbReference type="Gene3D" id="3.20.20.70">
    <property type="entry name" value="Aldolase class I"/>
    <property type="match status" value="1"/>
</dbReference>
<dbReference type="HAMAP" id="MF_00224">
    <property type="entry name" value="DHO_dh_type1"/>
    <property type="match status" value="1"/>
</dbReference>
<dbReference type="InterPro" id="IPR013785">
    <property type="entry name" value="Aldolase_TIM"/>
</dbReference>
<dbReference type="InterPro" id="IPR033888">
    <property type="entry name" value="DHOD_1B"/>
</dbReference>
<dbReference type="InterPro" id="IPR024920">
    <property type="entry name" value="Dihydroorotate_DH_1"/>
</dbReference>
<dbReference type="InterPro" id="IPR012135">
    <property type="entry name" value="Dihydroorotate_DH_1_2"/>
</dbReference>
<dbReference type="InterPro" id="IPR005720">
    <property type="entry name" value="Dihydroorotate_DH_cat"/>
</dbReference>
<dbReference type="InterPro" id="IPR001295">
    <property type="entry name" value="Dihydroorotate_DH_CS"/>
</dbReference>
<dbReference type="InterPro" id="IPR049622">
    <property type="entry name" value="Dihydroorotate_DH_I"/>
</dbReference>
<dbReference type="NCBIfam" id="NF005574">
    <property type="entry name" value="PRK07259.1"/>
    <property type="match status" value="1"/>
</dbReference>
<dbReference type="NCBIfam" id="TIGR01037">
    <property type="entry name" value="pyrD_sub1_fam"/>
    <property type="match status" value="1"/>
</dbReference>
<dbReference type="PANTHER" id="PTHR43073">
    <property type="entry name" value="DIHYDROPYRIMIDINE DEHYDROGENASE [NADP(+)]"/>
    <property type="match status" value="1"/>
</dbReference>
<dbReference type="PANTHER" id="PTHR43073:SF2">
    <property type="entry name" value="DIHYDROPYRIMIDINE DEHYDROGENASE [NADP(+)]"/>
    <property type="match status" value="1"/>
</dbReference>
<dbReference type="Pfam" id="PF01180">
    <property type="entry name" value="DHO_dh"/>
    <property type="match status" value="1"/>
</dbReference>
<dbReference type="PIRSF" id="PIRSF000164">
    <property type="entry name" value="DHO_oxidase"/>
    <property type="match status" value="1"/>
</dbReference>
<dbReference type="SUPFAM" id="SSF51395">
    <property type="entry name" value="FMN-linked oxidoreductases"/>
    <property type="match status" value="1"/>
</dbReference>
<dbReference type="PROSITE" id="PS00911">
    <property type="entry name" value="DHODEHASE_1"/>
    <property type="match status" value="1"/>
</dbReference>
<dbReference type="PROSITE" id="PS00912">
    <property type="entry name" value="DHODEHASE_2"/>
    <property type="match status" value="1"/>
</dbReference>
<sequence length="301" mass="32735">MSDISTTLAGIKLVNPFMVASGILDENGYTMKELLERGAAAVVTKSIGISERDGYPTPVIVEYGDSLINAVGLSNPGIENFGEEINIAKEAKRPIIGSVFAYNAEEFTKLSVKMEEYGVDAIELNLSCPHVKGFGLEVGSDPDLVEDIVNEIKSKVKVPVFAKLSPNVSNIIEIAKAAEKADAYVLINTVKAMAIDIYSRSPVLSNLYGGLSGPAIKPVGIRYVYEVKKETGKEIIGVGGISNYKDAIEYIMAGASAVQIGTALYKYGKGIFREMEWQLRTFMDEERFEKIEEMVGVAIKR</sequence>
<protein>
    <recommendedName>
        <fullName>Dihydroorotate dehydrogenase B (NAD(+)), catalytic subunit</fullName>
        <shortName>DHOD B</shortName>
        <shortName>DHODase B</shortName>
        <shortName>DHOdehase B</shortName>
        <ecNumber>1.3.1.14</ecNumber>
    </recommendedName>
    <alternativeName>
        <fullName>Dihydroorotate oxidase B</fullName>
    </alternativeName>
    <alternativeName>
        <fullName>Orotate reductase (NADH)</fullName>
    </alternativeName>
</protein>
<gene>
    <name type="primary">pyrD</name>
    <name type="ordered locus">TV1195</name>
    <name type="ORF">TVG1224769</name>
</gene>